<organism>
    <name type="scientific">Variovorax paradoxus (strain S110)</name>
    <dbReference type="NCBI Taxonomy" id="543728"/>
    <lineage>
        <taxon>Bacteria</taxon>
        <taxon>Pseudomonadati</taxon>
        <taxon>Pseudomonadota</taxon>
        <taxon>Betaproteobacteria</taxon>
        <taxon>Burkholderiales</taxon>
        <taxon>Comamonadaceae</taxon>
        <taxon>Variovorax</taxon>
    </lineage>
</organism>
<keyword id="KW-0547">Nucleotide-binding</keyword>
<feature type="chain" id="PRO_1000212343" description="Nucleotide-binding protein Vapar_3769">
    <location>
        <begin position="1"/>
        <end position="161"/>
    </location>
</feature>
<proteinExistence type="inferred from homology"/>
<protein>
    <recommendedName>
        <fullName evidence="1">Nucleotide-binding protein Vapar_3769</fullName>
    </recommendedName>
</protein>
<comment type="function">
    <text evidence="1">Nucleotide-binding protein.</text>
</comment>
<comment type="similarity">
    <text evidence="1">Belongs to the YajQ family.</text>
</comment>
<dbReference type="EMBL" id="CP001635">
    <property type="protein sequence ID" value="ACS20385.1"/>
    <property type="molecule type" value="Genomic_DNA"/>
</dbReference>
<dbReference type="SMR" id="C5CUU9"/>
<dbReference type="STRING" id="543728.Vapar_3769"/>
<dbReference type="KEGG" id="vap:Vapar_3769"/>
<dbReference type="eggNOG" id="COG1666">
    <property type="taxonomic scope" value="Bacteria"/>
</dbReference>
<dbReference type="HOGENOM" id="CLU_099839_1_0_4"/>
<dbReference type="OrthoDB" id="9801447at2"/>
<dbReference type="GO" id="GO:0005829">
    <property type="term" value="C:cytosol"/>
    <property type="evidence" value="ECO:0007669"/>
    <property type="project" value="TreeGrafter"/>
</dbReference>
<dbReference type="GO" id="GO:0000166">
    <property type="term" value="F:nucleotide binding"/>
    <property type="evidence" value="ECO:0007669"/>
    <property type="project" value="TreeGrafter"/>
</dbReference>
<dbReference type="CDD" id="cd11740">
    <property type="entry name" value="YajQ_like"/>
    <property type="match status" value="1"/>
</dbReference>
<dbReference type="Gene3D" id="3.30.70.860">
    <property type="match status" value="1"/>
</dbReference>
<dbReference type="HAMAP" id="MF_00632">
    <property type="entry name" value="YajQ"/>
    <property type="match status" value="1"/>
</dbReference>
<dbReference type="InterPro" id="IPR007551">
    <property type="entry name" value="DUF520"/>
</dbReference>
<dbReference type="InterPro" id="IPR035571">
    <property type="entry name" value="UPF0234-like_C"/>
</dbReference>
<dbReference type="InterPro" id="IPR036183">
    <property type="entry name" value="YajQ-like_sf"/>
</dbReference>
<dbReference type="NCBIfam" id="NF003819">
    <property type="entry name" value="PRK05412.1"/>
    <property type="match status" value="1"/>
</dbReference>
<dbReference type="PANTHER" id="PTHR30476">
    <property type="entry name" value="UPF0234 PROTEIN YAJQ"/>
    <property type="match status" value="1"/>
</dbReference>
<dbReference type="PANTHER" id="PTHR30476:SF0">
    <property type="entry name" value="UPF0234 PROTEIN YAJQ"/>
    <property type="match status" value="1"/>
</dbReference>
<dbReference type="Pfam" id="PF04461">
    <property type="entry name" value="DUF520"/>
    <property type="match status" value="1"/>
</dbReference>
<dbReference type="SUPFAM" id="SSF89963">
    <property type="entry name" value="YajQ-like"/>
    <property type="match status" value="2"/>
</dbReference>
<reference key="1">
    <citation type="journal article" date="2011" name="J. Bacteriol.">
        <title>Complete genome sequence of the metabolically versatile plant growth-promoting endophyte, Variovorax paradoxus S110.</title>
        <authorList>
            <person name="Han J.I."/>
            <person name="Choi H.K."/>
            <person name="Lee S.W."/>
            <person name="Orwin P.M."/>
            <person name="Kim J."/>
            <person name="Laroe S.L."/>
            <person name="Kim T.G."/>
            <person name="O'Neil J."/>
            <person name="Leadbetter J.R."/>
            <person name="Lee S.Y."/>
            <person name="Hur C.G."/>
            <person name="Spain J.C."/>
            <person name="Ovchinnikova G."/>
            <person name="Goodwin L."/>
            <person name="Han C."/>
        </authorList>
    </citation>
    <scope>NUCLEOTIDE SEQUENCE [LARGE SCALE GENOMIC DNA]</scope>
    <source>
        <strain>S110</strain>
    </source>
</reference>
<sequence length="161" mass="17846">MPSFDTVCEPNLPEVKNAVENTAKEIATRFDFKGTAAAVELKDKEITMIGDAEFQLVQVEDILRAKLTKRSVDVRFLDKGDVQKIGGDKVKQVIKVKSGIESEQAKKITRIIKDSKLKVQAAIQGDAVRITGAKRDDLQAAMALIKKDVPDMPLSFNNFRD</sequence>
<name>Y3769_VARPS</name>
<gene>
    <name type="ordered locus">Vapar_3769</name>
</gene>
<evidence type="ECO:0000255" key="1">
    <source>
        <dbReference type="HAMAP-Rule" id="MF_00632"/>
    </source>
</evidence>
<accession>C5CUU9</accession>